<protein>
    <recommendedName>
        <fullName evidence="1">tRNA pseudouridine synthase A</fullName>
        <ecNumber evidence="1">5.4.99.12</ecNumber>
    </recommendedName>
    <alternativeName>
        <fullName evidence="1">tRNA pseudouridine(38-40) synthase</fullName>
    </alternativeName>
    <alternativeName>
        <fullName evidence="1">tRNA pseudouridylate synthase I</fullName>
    </alternativeName>
    <alternativeName>
        <fullName evidence="1">tRNA-uridine isomerase I</fullName>
    </alternativeName>
</protein>
<accession>Q3BRL0</accession>
<name>TRUA_XANE5</name>
<feature type="chain" id="PRO_1000017211" description="tRNA pseudouridine synthase A">
    <location>
        <begin position="1"/>
        <end position="257"/>
    </location>
</feature>
<feature type="active site" description="Nucleophile" evidence="1">
    <location>
        <position position="53"/>
    </location>
</feature>
<feature type="binding site" evidence="1">
    <location>
        <position position="111"/>
    </location>
    <ligand>
        <name>substrate</name>
    </ligand>
</feature>
<comment type="function">
    <text evidence="1">Formation of pseudouridine at positions 38, 39 and 40 in the anticodon stem and loop of transfer RNAs.</text>
</comment>
<comment type="catalytic activity">
    <reaction evidence="1">
        <text>uridine(38/39/40) in tRNA = pseudouridine(38/39/40) in tRNA</text>
        <dbReference type="Rhea" id="RHEA:22376"/>
        <dbReference type="Rhea" id="RHEA-COMP:10085"/>
        <dbReference type="Rhea" id="RHEA-COMP:10087"/>
        <dbReference type="ChEBI" id="CHEBI:65314"/>
        <dbReference type="ChEBI" id="CHEBI:65315"/>
        <dbReference type="EC" id="5.4.99.12"/>
    </reaction>
</comment>
<comment type="subunit">
    <text evidence="1">Homodimer.</text>
</comment>
<comment type="similarity">
    <text evidence="1">Belongs to the tRNA pseudouridine synthase TruA family.</text>
</comment>
<sequence length="257" mass="28363">MRYALGVEYDGSEFQGWQQLGEHGGPSVQASLQAALSSVADAPVQVVCAGRTDAGVHGECQVVHFDSDARREPRGWMLGTTARLPPSIAVRWCVPAADDFHARFSARARRYRYRLLNRQIRPALYRQTLSWERRPLDADAMHAAAQALLGENDFSAFRSVQCQALHARRHLQAIHVQRIGEVVEVQVQANAFLHHMVRNIVGSLILVGTGEQPADWIATLLAGRDRTVAGPTAPPQGLVFIGPLYPAEWHLPAEVTQ</sequence>
<keyword id="KW-0413">Isomerase</keyword>
<keyword id="KW-0819">tRNA processing</keyword>
<evidence type="ECO:0000255" key="1">
    <source>
        <dbReference type="HAMAP-Rule" id="MF_00171"/>
    </source>
</evidence>
<proteinExistence type="inferred from homology"/>
<gene>
    <name evidence="1" type="primary">truA</name>
    <name type="ordered locus">XCV2872</name>
</gene>
<dbReference type="EC" id="5.4.99.12" evidence="1"/>
<dbReference type="EMBL" id="AM039952">
    <property type="protein sequence ID" value="CAJ24551.1"/>
    <property type="molecule type" value="Genomic_DNA"/>
</dbReference>
<dbReference type="RefSeq" id="WP_008570951.1">
    <property type="nucleotide sequence ID" value="NZ_CP017190.1"/>
</dbReference>
<dbReference type="SMR" id="Q3BRL0"/>
<dbReference type="STRING" id="456327.BJD11_08495"/>
<dbReference type="GeneID" id="97511008"/>
<dbReference type="KEGG" id="xcv:XCV2872"/>
<dbReference type="eggNOG" id="COG0101">
    <property type="taxonomic scope" value="Bacteria"/>
</dbReference>
<dbReference type="HOGENOM" id="CLU_014673_0_2_6"/>
<dbReference type="Proteomes" id="UP000007069">
    <property type="component" value="Chromosome"/>
</dbReference>
<dbReference type="GO" id="GO:0003723">
    <property type="term" value="F:RNA binding"/>
    <property type="evidence" value="ECO:0007669"/>
    <property type="project" value="InterPro"/>
</dbReference>
<dbReference type="GO" id="GO:0160147">
    <property type="term" value="F:tRNA pseudouridine(38-40) synthase activity"/>
    <property type="evidence" value="ECO:0007669"/>
    <property type="project" value="UniProtKB-EC"/>
</dbReference>
<dbReference type="GO" id="GO:0031119">
    <property type="term" value="P:tRNA pseudouridine synthesis"/>
    <property type="evidence" value="ECO:0007669"/>
    <property type="project" value="UniProtKB-UniRule"/>
</dbReference>
<dbReference type="CDD" id="cd02570">
    <property type="entry name" value="PseudoU_synth_EcTruA"/>
    <property type="match status" value="1"/>
</dbReference>
<dbReference type="FunFam" id="3.30.70.580:FF:000001">
    <property type="entry name" value="tRNA pseudouridine synthase A"/>
    <property type="match status" value="1"/>
</dbReference>
<dbReference type="FunFam" id="3.30.70.660:FF:000008">
    <property type="entry name" value="tRNA pseudouridine synthase A"/>
    <property type="match status" value="1"/>
</dbReference>
<dbReference type="Gene3D" id="3.30.70.660">
    <property type="entry name" value="Pseudouridine synthase I, catalytic domain, C-terminal subdomain"/>
    <property type="match status" value="1"/>
</dbReference>
<dbReference type="Gene3D" id="3.30.70.580">
    <property type="entry name" value="Pseudouridine synthase I, catalytic domain, N-terminal subdomain"/>
    <property type="match status" value="1"/>
</dbReference>
<dbReference type="HAMAP" id="MF_00171">
    <property type="entry name" value="TruA"/>
    <property type="match status" value="1"/>
</dbReference>
<dbReference type="InterPro" id="IPR020103">
    <property type="entry name" value="PsdUridine_synth_cat_dom_sf"/>
</dbReference>
<dbReference type="InterPro" id="IPR001406">
    <property type="entry name" value="PsdUridine_synth_TruA"/>
</dbReference>
<dbReference type="InterPro" id="IPR020097">
    <property type="entry name" value="PsdUridine_synth_TruA_a/b_dom"/>
</dbReference>
<dbReference type="InterPro" id="IPR020095">
    <property type="entry name" value="PsdUridine_synth_TruA_C"/>
</dbReference>
<dbReference type="InterPro" id="IPR020094">
    <property type="entry name" value="TruA/RsuA/RluB/E/F_N"/>
</dbReference>
<dbReference type="NCBIfam" id="TIGR00071">
    <property type="entry name" value="hisT_truA"/>
    <property type="match status" value="1"/>
</dbReference>
<dbReference type="PANTHER" id="PTHR11142">
    <property type="entry name" value="PSEUDOURIDYLATE SYNTHASE"/>
    <property type="match status" value="1"/>
</dbReference>
<dbReference type="PANTHER" id="PTHR11142:SF0">
    <property type="entry name" value="TRNA PSEUDOURIDINE SYNTHASE-LIKE 1"/>
    <property type="match status" value="1"/>
</dbReference>
<dbReference type="Pfam" id="PF01416">
    <property type="entry name" value="PseudoU_synth_1"/>
    <property type="match status" value="2"/>
</dbReference>
<dbReference type="PIRSF" id="PIRSF001430">
    <property type="entry name" value="tRNA_psdUrid_synth"/>
    <property type="match status" value="1"/>
</dbReference>
<dbReference type="SUPFAM" id="SSF55120">
    <property type="entry name" value="Pseudouridine synthase"/>
    <property type="match status" value="1"/>
</dbReference>
<reference key="1">
    <citation type="journal article" date="2005" name="J. Bacteriol.">
        <title>Insights into genome plasticity and pathogenicity of the plant pathogenic Bacterium Xanthomonas campestris pv. vesicatoria revealed by the complete genome sequence.</title>
        <authorList>
            <person name="Thieme F."/>
            <person name="Koebnik R."/>
            <person name="Bekel T."/>
            <person name="Berger C."/>
            <person name="Boch J."/>
            <person name="Buettner D."/>
            <person name="Caldana C."/>
            <person name="Gaigalat L."/>
            <person name="Goesmann A."/>
            <person name="Kay S."/>
            <person name="Kirchner O."/>
            <person name="Lanz C."/>
            <person name="Linke B."/>
            <person name="McHardy A.C."/>
            <person name="Meyer F."/>
            <person name="Mittenhuber G."/>
            <person name="Nies D.H."/>
            <person name="Niesbach-Kloesgen U."/>
            <person name="Patschkowski T."/>
            <person name="Rueckert C."/>
            <person name="Rupp O."/>
            <person name="Schneiker S."/>
            <person name="Schuster S.C."/>
            <person name="Vorhoelter F.J."/>
            <person name="Weber E."/>
            <person name="Puehler A."/>
            <person name="Bonas U."/>
            <person name="Bartels D."/>
            <person name="Kaiser O."/>
        </authorList>
    </citation>
    <scope>NUCLEOTIDE SEQUENCE [LARGE SCALE GENOMIC DNA]</scope>
    <source>
        <strain>85-10</strain>
    </source>
</reference>
<organism>
    <name type="scientific">Xanthomonas euvesicatoria pv. vesicatoria (strain 85-10)</name>
    <name type="common">Xanthomonas campestris pv. vesicatoria</name>
    <dbReference type="NCBI Taxonomy" id="316273"/>
    <lineage>
        <taxon>Bacteria</taxon>
        <taxon>Pseudomonadati</taxon>
        <taxon>Pseudomonadota</taxon>
        <taxon>Gammaproteobacteria</taxon>
        <taxon>Lysobacterales</taxon>
        <taxon>Lysobacteraceae</taxon>
        <taxon>Xanthomonas</taxon>
    </lineage>
</organism>